<proteinExistence type="inferred from homology"/>
<protein>
    <recommendedName>
        <fullName evidence="1">ATP-dependent RNA helicase RhlB</fullName>
        <ecNumber evidence="1">3.6.4.13</ecNumber>
    </recommendedName>
</protein>
<organism>
    <name type="scientific">Cronobacter sakazakii (strain ATCC BAA-894)</name>
    <name type="common">Enterobacter sakazakii</name>
    <dbReference type="NCBI Taxonomy" id="290339"/>
    <lineage>
        <taxon>Bacteria</taxon>
        <taxon>Pseudomonadati</taxon>
        <taxon>Pseudomonadota</taxon>
        <taxon>Gammaproteobacteria</taxon>
        <taxon>Enterobacterales</taxon>
        <taxon>Enterobacteriaceae</taxon>
        <taxon>Cronobacter</taxon>
    </lineage>
</organism>
<sequence>MSKTHLTEQKFSDFALHPVVVQALEKKGFYNCTPIQALALPLTLAGRDVAGQAQTGTGKTMAFLTSTFHYLLSHPAAENRQVNQPRALIMAPTRELAVQIHSDAEPLAEATGIKLGLAYGGDGYDKQLKVLESGVDILIGTTGRLIDYTKQNHVNLGAIQVVVLDEADRMYDLGFIKDIRWLFRRMPAATERLNMLFSATLSYRVRELAFEQMNNAEYVEVEPEQKTGHRIKEELFYPSNEEKMRLLQTLIEEEWPDRAIIFANTKHRCEDIWGHLAADGHRVGLLTGDVAQKKRLRILDEFTRGDLDILVATDVAARGLHIPAVTHVFNYDLPDDCEDYVHRIGRTGRAGASGHSISLACEEYALNLPAIETYIGHSIPVSKYNPDALLSELPPPKRLSRPRTGNGPRRSGAPRNRRRTG</sequence>
<evidence type="ECO:0000255" key="1">
    <source>
        <dbReference type="HAMAP-Rule" id="MF_00661"/>
    </source>
</evidence>
<evidence type="ECO:0000256" key="2">
    <source>
        <dbReference type="SAM" id="MobiDB-lite"/>
    </source>
</evidence>
<dbReference type="EC" id="3.6.4.13" evidence="1"/>
<dbReference type="EMBL" id="CP000783">
    <property type="protein sequence ID" value="ABU78969.1"/>
    <property type="molecule type" value="Genomic_DNA"/>
</dbReference>
<dbReference type="RefSeq" id="WP_007872554.1">
    <property type="nucleotide sequence ID" value="NC_009778.1"/>
</dbReference>
<dbReference type="SMR" id="A7MQI2"/>
<dbReference type="GeneID" id="56732428"/>
<dbReference type="KEGG" id="esa:ESA_03777"/>
<dbReference type="HOGENOM" id="CLU_003041_1_3_6"/>
<dbReference type="Proteomes" id="UP000000260">
    <property type="component" value="Chromosome"/>
</dbReference>
<dbReference type="GO" id="GO:0005829">
    <property type="term" value="C:cytosol"/>
    <property type="evidence" value="ECO:0007669"/>
    <property type="project" value="TreeGrafter"/>
</dbReference>
<dbReference type="GO" id="GO:0005524">
    <property type="term" value="F:ATP binding"/>
    <property type="evidence" value="ECO:0007669"/>
    <property type="project" value="UniProtKB-UniRule"/>
</dbReference>
<dbReference type="GO" id="GO:0016887">
    <property type="term" value="F:ATP hydrolysis activity"/>
    <property type="evidence" value="ECO:0007669"/>
    <property type="project" value="RHEA"/>
</dbReference>
<dbReference type="GO" id="GO:0003723">
    <property type="term" value="F:RNA binding"/>
    <property type="evidence" value="ECO:0007669"/>
    <property type="project" value="UniProtKB-UniRule"/>
</dbReference>
<dbReference type="GO" id="GO:0003724">
    <property type="term" value="F:RNA helicase activity"/>
    <property type="evidence" value="ECO:0007669"/>
    <property type="project" value="UniProtKB-UniRule"/>
</dbReference>
<dbReference type="GO" id="GO:0006401">
    <property type="term" value="P:RNA catabolic process"/>
    <property type="evidence" value="ECO:0007669"/>
    <property type="project" value="UniProtKB-UniRule"/>
</dbReference>
<dbReference type="CDD" id="cd00268">
    <property type="entry name" value="DEADc"/>
    <property type="match status" value="1"/>
</dbReference>
<dbReference type="CDD" id="cd18787">
    <property type="entry name" value="SF2_C_DEAD"/>
    <property type="match status" value="1"/>
</dbReference>
<dbReference type="FunFam" id="3.40.50.300:FF:000008">
    <property type="entry name" value="ATP-dependent RNA helicase RhlB"/>
    <property type="match status" value="1"/>
</dbReference>
<dbReference type="FunFam" id="3.40.50.300:FF:000312">
    <property type="entry name" value="ATP-dependent RNA helicase RhlB"/>
    <property type="match status" value="1"/>
</dbReference>
<dbReference type="Gene3D" id="3.40.50.300">
    <property type="entry name" value="P-loop containing nucleotide triphosphate hydrolases"/>
    <property type="match status" value="2"/>
</dbReference>
<dbReference type="HAMAP" id="MF_00661">
    <property type="entry name" value="DEAD_helicase_RhlB"/>
    <property type="match status" value="1"/>
</dbReference>
<dbReference type="InterPro" id="IPR011545">
    <property type="entry name" value="DEAD/DEAH_box_helicase_dom"/>
</dbReference>
<dbReference type="InterPro" id="IPR050079">
    <property type="entry name" value="DEAD_box_RNA_helicase"/>
</dbReference>
<dbReference type="InterPro" id="IPR014001">
    <property type="entry name" value="Helicase_ATP-bd"/>
</dbReference>
<dbReference type="InterPro" id="IPR001650">
    <property type="entry name" value="Helicase_C-like"/>
</dbReference>
<dbReference type="InterPro" id="IPR027417">
    <property type="entry name" value="P-loop_NTPase"/>
</dbReference>
<dbReference type="InterPro" id="IPR000629">
    <property type="entry name" value="RNA-helicase_DEAD-box_CS"/>
</dbReference>
<dbReference type="InterPro" id="IPR023554">
    <property type="entry name" value="RNA_helicase_ATP-dep_RhlB"/>
</dbReference>
<dbReference type="InterPro" id="IPR014014">
    <property type="entry name" value="RNA_helicase_DEAD_Q_motif"/>
</dbReference>
<dbReference type="NCBIfam" id="NF003419">
    <property type="entry name" value="PRK04837.1"/>
    <property type="match status" value="1"/>
</dbReference>
<dbReference type="PANTHER" id="PTHR47959:SF10">
    <property type="entry name" value="ATP-DEPENDENT RNA HELICASE RHLB"/>
    <property type="match status" value="1"/>
</dbReference>
<dbReference type="PANTHER" id="PTHR47959">
    <property type="entry name" value="ATP-DEPENDENT RNA HELICASE RHLE-RELATED"/>
    <property type="match status" value="1"/>
</dbReference>
<dbReference type="Pfam" id="PF00270">
    <property type="entry name" value="DEAD"/>
    <property type="match status" value="1"/>
</dbReference>
<dbReference type="Pfam" id="PF00271">
    <property type="entry name" value="Helicase_C"/>
    <property type="match status" value="1"/>
</dbReference>
<dbReference type="SMART" id="SM00487">
    <property type="entry name" value="DEXDc"/>
    <property type="match status" value="1"/>
</dbReference>
<dbReference type="SMART" id="SM00490">
    <property type="entry name" value="HELICc"/>
    <property type="match status" value="1"/>
</dbReference>
<dbReference type="SUPFAM" id="SSF52540">
    <property type="entry name" value="P-loop containing nucleoside triphosphate hydrolases"/>
    <property type="match status" value="1"/>
</dbReference>
<dbReference type="PROSITE" id="PS00039">
    <property type="entry name" value="DEAD_ATP_HELICASE"/>
    <property type="match status" value="1"/>
</dbReference>
<dbReference type="PROSITE" id="PS51192">
    <property type="entry name" value="HELICASE_ATP_BIND_1"/>
    <property type="match status" value="1"/>
</dbReference>
<dbReference type="PROSITE" id="PS51194">
    <property type="entry name" value="HELICASE_CTER"/>
    <property type="match status" value="1"/>
</dbReference>
<dbReference type="PROSITE" id="PS51195">
    <property type="entry name" value="Q_MOTIF"/>
    <property type="match status" value="1"/>
</dbReference>
<reference key="1">
    <citation type="journal article" date="2010" name="PLoS ONE">
        <title>Genome sequence of Cronobacter sakazakii BAA-894 and comparative genomic hybridization analysis with other Cronobacter species.</title>
        <authorList>
            <person name="Kucerova E."/>
            <person name="Clifton S.W."/>
            <person name="Xia X.Q."/>
            <person name="Long F."/>
            <person name="Porwollik S."/>
            <person name="Fulton L."/>
            <person name="Fronick C."/>
            <person name="Minx P."/>
            <person name="Kyung K."/>
            <person name="Warren W."/>
            <person name="Fulton R."/>
            <person name="Feng D."/>
            <person name="Wollam A."/>
            <person name="Shah N."/>
            <person name="Bhonagiri V."/>
            <person name="Nash W.E."/>
            <person name="Hallsworth-Pepin K."/>
            <person name="Wilson R.K."/>
            <person name="McClelland M."/>
            <person name="Forsythe S.J."/>
        </authorList>
    </citation>
    <scope>NUCLEOTIDE SEQUENCE [LARGE SCALE GENOMIC DNA]</scope>
    <source>
        <strain>ATCC BAA-894</strain>
    </source>
</reference>
<accession>A7MQI2</accession>
<keyword id="KW-0067">ATP-binding</keyword>
<keyword id="KW-0963">Cytoplasm</keyword>
<keyword id="KW-0347">Helicase</keyword>
<keyword id="KW-0378">Hydrolase</keyword>
<keyword id="KW-0547">Nucleotide-binding</keyword>
<keyword id="KW-1185">Reference proteome</keyword>
<keyword id="KW-0694">RNA-binding</keyword>
<name>RHLB_CROS8</name>
<feature type="chain" id="PRO_1000082844" description="ATP-dependent RNA helicase RhlB">
    <location>
        <begin position="1"/>
        <end position="421"/>
    </location>
</feature>
<feature type="domain" description="Helicase ATP-binding" evidence="1">
    <location>
        <begin position="40"/>
        <end position="219"/>
    </location>
</feature>
<feature type="domain" description="Helicase C-terminal" evidence="1">
    <location>
        <begin position="245"/>
        <end position="390"/>
    </location>
</feature>
<feature type="region of interest" description="Disordered" evidence="2">
    <location>
        <begin position="390"/>
        <end position="421"/>
    </location>
</feature>
<feature type="short sequence motif" description="Q motif">
    <location>
        <begin position="9"/>
        <end position="37"/>
    </location>
</feature>
<feature type="short sequence motif" description="DEAD box">
    <location>
        <begin position="165"/>
        <end position="168"/>
    </location>
</feature>
<feature type="compositionally biased region" description="Low complexity" evidence="2">
    <location>
        <begin position="405"/>
        <end position="414"/>
    </location>
</feature>
<feature type="binding site" evidence="1">
    <location>
        <begin position="53"/>
        <end position="60"/>
    </location>
    <ligand>
        <name>ATP</name>
        <dbReference type="ChEBI" id="CHEBI:30616"/>
    </ligand>
</feature>
<gene>
    <name evidence="1" type="primary">rhlB</name>
    <name type="ordered locus">ESA_03777</name>
</gene>
<comment type="function">
    <text evidence="1">DEAD-box RNA helicase involved in RNA degradation. Has RNA-dependent ATPase activity and unwinds double-stranded RNA.</text>
</comment>
<comment type="catalytic activity">
    <reaction evidence="1">
        <text>ATP + H2O = ADP + phosphate + H(+)</text>
        <dbReference type="Rhea" id="RHEA:13065"/>
        <dbReference type="ChEBI" id="CHEBI:15377"/>
        <dbReference type="ChEBI" id="CHEBI:15378"/>
        <dbReference type="ChEBI" id="CHEBI:30616"/>
        <dbReference type="ChEBI" id="CHEBI:43474"/>
        <dbReference type="ChEBI" id="CHEBI:456216"/>
        <dbReference type="EC" id="3.6.4.13"/>
    </reaction>
</comment>
<comment type="subunit">
    <text evidence="1">Component of the RNA degradosome, which is a multiprotein complex involved in RNA processing and mRNA degradation.</text>
</comment>
<comment type="subcellular location">
    <subcellularLocation>
        <location evidence="1">Cytoplasm</location>
    </subcellularLocation>
</comment>
<comment type="similarity">
    <text evidence="1">Belongs to the DEAD box helicase family. RhlB subfamily.</text>
</comment>